<feature type="chain" id="PRO_0000257786" description="Cobalt-precorrin-5B C(1)-methyltransferase">
    <location>
        <begin position="1"/>
        <end position="380"/>
    </location>
</feature>
<accession>Q2NHX5</accession>
<proteinExistence type="inferred from homology"/>
<dbReference type="EC" id="2.1.1.195" evidence="1"/>
<dbReference type="EMBL" id="CP000102">
    <property type="protein sequence ID" value="ABC56521.1"/>
    <property type="molecule type" value="Genomic_DNA"/>
</dbReference>
<dbReference type="SMR" id="Q2NHX5"/>
<dbReference type="STRING" id="339860.Msp_0102"/>
<dbReference type="KEGG" id="mst:Msp_0102"/>
<dbReference type="eggNOG" id="arCOG04383">
    <property type="taxonomic scope" value="Archaea"/>
</dbReference>
<dbReference type="HOGENOM" id="CLU_041273_1_0_2"/>
<dbReference type="UniPathway" id="UPA00148">
    <property type="reaction ID" value="UER00227"/>
</dbReference>
<dbReference type="Proteomes" id="UP000001931">
    <property type="component" value="Chromosome"/>
</dbReference>
<dbReference type="GO" id="GO:0043780">
    <property type="term" value="F:cobalt-precorrin-5B C1-methyltransferase activity"/>
    <property type="evidence" value="ECO:0007669"/>
    <property type="project" value="RHEA"/>
</dbReference>
<dbReference type="GO" id="GO:0019251">
    <property type="term" value="P:anaerobic cobalamin biosynthetic process"/>
    <property type="evidence" value="ECO:0007669"/>
    <property type="project" value="UniProtKB-UniRule"/>
</dbReference>
<dbReference type="GO" id="GO:0032259">
    <property type="term" value="P:methylation"/>
    <property type="evidence" value="ECO:0007669"/>
    <property type="project" value="UniProtKB-KW"/>
</dbReference>
<dbReference type="Gene3D" id="3.30.2110.10">
    <property type="entry name" value="CbiD-like"/>
    <property type="match status" value="1"/>
</dbReference>
<dbReference type="HAMAP" id="MF_00787">
    <property type="entry name" value="CbiD"/>
    <property type="match status" value="1"/>
</dbReference>
<dbReference type="InterPro" id="IPR002748">
    <property type="entry name" value="CbiD"/>
</dbReference>
<dbReference type="InterPro" id="IPR036074">
    <property type="entry name" value="CbiD_sf"/>
</dbReference>
<dbReference type="NCBIfam" id="TIGR00312">
    <property type="entry name" value="cbiD"/>
    <property type="match status" value="1"/>
</dbReference>
<dbReference type="PANTHER" id="PTHR35863">
    <property type="entry name" value="COBALT-PRECORRIN-5B C(1)-METHYLTRANSFERASE"/>
    <property type="match status" value="1"/>
</dbReference>
<dbReference type="PANTHER" id="PTHR35863:SF1">
    <property type="entry name" value="COBALT-PRECORRIN-5B C(1)-METHYLTRANSFERASE"/>
    <property type="match status" value="1"/>
</dbReference>
<dbReference type="Pfam" id="PF01888">
    <property type="entry name" value="CbiD"/>
    <property type="match status" value="1"/>
</dbReference>
<dbReference type="PIRSF" id="PIRSF026782">
    <property type="entry name" value="CbiD"/>
    <property type="match status" value="1"/>
</dbReference>
<dbReference type="SUPFAM" id="SSF111342">
    <property type="entry name" value="CbiD-like"/>
    <property type="match status" value="1"/>
</dbReference>
<keyword id="KW-0169">Cobalamin biosynthesis</keyword>
<keyword id="KW-0489">Methyltransferase</keyword>
<keyword id="KW-1185">Reference proteome</keyword>
<keyword id="KW-0949">S-adenosyl-L-methionine</keyword>
<keyword id="KW-0808">Transferase</keyword>
<name>CBID_METST</name>
<protein>
    <recommendedName>
        <fullName evidence="1">Cobalt-precorrin-5B C(1)-methyltransferase</fullName>
        <ecNumber evidence="1">2.1.1.195</ecNumber>
    </recommendedName>
    <alternativeName>
        <fullName evidence="1">Cobalt-precorrin-6A synthase</fullName>
    </alternativeName>
</protein>
<reference key="1">
    <citation type="journal article" date="2006" name="J. Bacteriol.">
        <title>The genome sequence of Methanosphaera stadtmanae reveals why this human intestinal archaeon is restricted to methanol and H2 for methane formation and ATP synthesis.</title>
        <authorList>
            <person name="Fricke W.F."/>
            <person name="Seedorf H."/>
            <person name="Henne A."/>
            <person name="Kruer M."/>
            <person name="Liesegang H."/>
            <person name="Hedderich R."/>
            <person name="Gottschalk G."/>
            <person name="Thauer R.K."/>
        </authorList>
    </citation>
    <scope>NUCLEOTIDE SEQUENCE [LARGE SCALE GENOMIC DNA]</scope>
    <source>
        <strain>ATCC 43021 / DSM 3091 / JCM 11832 / MCB-3</strain>
    </source>
</reference>
<organism>
    <name type="scientific">Methanosphaera stadtmanae (strain ATCC 43021 / DSM 3091 / JCM 11832 / MCB-3)</name>
    <dbReference type="NCBI Taxonomy" id="339860"/>
    <lineage>
        <taxon>Archaea</taxon>
        <taxon>Methanobacteriati</taxon>
        <taxon>Methanobacteriota</taxon>
        <taxon>Methanomada group</taxon>
        <taxon>Methanobacteria</taxon>
        <taxon>Methanobacteriales</taxon>
        <taxon>Methanobacteriaceae</taxon>
        <taxon>Methanosphaera</taxon>
    </lineage>
</organism>
<evidence type="ECO:0000255" key="1">
    <source>
        <dbReference type="HAMAP-Rule" id="MF_00787"/>
    </source>
</evidence>
<sequence>MNLKLTSINGGLKIEVHENSSQKSGITTGSVATAASVAALLKLVDKAPDIVKITAPTTTLTVEIEDTSFIDNNTARAIVKKPNYNDPDVTRGMEIISEVTLTNNSGVIEITGGDGVGRVTKPGLQIPVGEYAINPVPRKMIKENIMKYLPEDNGAIIKIIIPEGKKIAPKTMNSRLGIIDGISILGTTGIARPMSSKAYTDSLRVQIDVALANGYKDLLFVPGNIGTRIAKEKLVLDEDEIIEMSNFVGYMLEEAHKTGKIRSITLFGHAGKLIKIAAGIFNTKQSVADARREIMTAYAGLVGANKKTLHDIYNCITTEDVIKILDENNITTEVFELIANKIVELCSLKYEGIKFHAVIVKMNGEILTPSHIQNIPFNKK</sequence>
<gene>
    <name evidence="1" type="primary">cbiD</name>
    <name type="ordered locus">Msp_0102</name>
</gene>
<comment type="function">
    <text evidence="1">Catalyzes the methylation of C-1 in cobalt-precorrin-5B to form cobalt-precorrin-6A.</text>
</comment>
<comment type="catalytic activity">
    <reaction evidence="1">
        <text>Co-precorrin-5B + S-adenosyl-L-methionine = Co-precorrin-6A + S-adenosyl-L-homocysteine</text>
        <dbReference type="Rhea" id="RHEA:26285"/>
        <dbReference type="ChEBI" id="CHEBI:57856"/>
        <dbReference type="ChEBI" id="CHEBI:59789"/>
        <dbReference type="ChEBI" id="CHEBI:60063"/>
        <dbReference type="ChEBI" id="CHEBI:60064"/>
        <dbReference type="EC" id="2.1.1.195"/>
    </reaction>
</comment>
<comment type="pathway">
    <text evidence="1">Cofactor biosynthesis; adenosylcobalamin biosynthesis; cob(II)yrinate a,c-diamide from sirohydrochlorin (anaerobic route): step 6/10.</text>
</comment>
<comment type="similarity">
    <text evidence="1">Belongs to the CbiD family.</text>
</comment>